<proteinExistence type="inferred from homology"/>
<name>YCIC_ESCF3</name>
<comment type="subcellular location">
    <subcellularLocation>
        <location evidence="1">Cell inner membrane</location>
        <topology evidence="1">Multi-pass membrane protein</topology>
    </subcellularLocation>
</comment>
<comment type="similarity">
    <text evidence="1">Belongs to the UPF0259 family.</text>
</comment>
<feature type="chain" id="PRO_1000136586" description="UPF0259 membrane protein YciC">
    <location>
        <begin position="1"/>
        <end position="247"/>
    </location>
</feature>
<feature type="transmembrane region" description="Helical" evidence="1">
    <location>
        <begin position="20"/>
        <end position="40"/>
    </location>
</feature>
<feature type="transmembrane region" description="Helical" evidence="1">
    <location>
        <begin position="87"/>
        <end position="107"/>
    </location>
</feature>
<feature type="transmembrane region" description="Helical" evidence="1">
    <location>
        <begin position="119"/>
        <end position="139"/>
    </location>
</feature>
<feature type="transmembrane region" description="Helical" evidence="1">
    <location>
        <begin position="142"/>
        <end position="162"/>
    </location>
</feature>
<feature type="transmembrane region" description="Helical" evidence="1">
    <location>
        <begin position="189"/>
        <end position="209"/>
    </location>
</feature>
<feature type="transmembrane region" description="Helical" evidence="1">
    <location>
        <begin position="219"/>
        <end position="239"/>
    </location>
</feature>
<evidence type="ECO:0000255" key="1">
    <source>
        <dbReference type="HAMAP-Rule" id="MF_01067"/>
    </source>
</evidence>
<accession>B7LS23</accession>
<protein>
    <recommendedName>
        <fullName evidence="1">UPF0259 membrane protein YciC</fullName>
    </recommendedName>
</protein>
<organism>
    <name type="scientific">Escherichia fergusonii (strain ATCC 35469 / DSM 13698 / CCUG 18766 / IAM 14443 / JCM 21226 / LMG 7866 / NBRC 102419 / NCTC 12128 / CDC 0568-73)</name>
    <dbReference type="NCBI Taxonomy" id="585054"/>
    <lineage>
        <taxon>Bacteria</taxon>
        <taxon>Pseudomonadati</taxon>
        <taxon>Pseudomonadota</taxon>
        <taxon>Gammaproteobacteria</taxon>
        <taxon>Enterobacterales</taxon>
        <taxon>Enterobacteriaceae</taxon>
        <taxon>Escherichia</taxon>
    </lineage>
</organism>
<sequence>MSITAQSVYRDTGNFFRNQFMTILLVSLLCAFITVVIGHVFSPSEAQLASLDKVETLSDNAGLFEIVQNMSLEQKQVLVQASAASTFSGLIGNAILAGGMLLLIQLVSAGHRVSALRAIGASAPILPKLFILIFLTTLMVQIGIMFVVVPGILMAIVLALAPVMLVQDKMGVFASMRSSIRLTWANMRLIAPAVLSWLLAKTALLLLASRFAALTPEVGAILANTLSNLFSAVLLIYLFRLYMLIRQ</sequence>
<keyword id="KW-0997">Cell inner membrane</keyword>
<keyword id="KW-1003">Cell membrane</keyword>
<keyword id="KW-0472">Membrane</keyword>
<keyword id="KW-0812">Transmembrane</keyword>
<keyword id="KW-1133">Transmembrane helix</keyword>
<dbReference type="EMBL" id="CU928158">
    <property type="protein sequence ID" value="CAQ89215.1"/>
    <property type="molecule type" value="Genomic_DNA"/>
</dbReference>
<dbReference type="RefSeq" id="WP_000028520.1">
    <property type="nucleotide sequence ID" value="NC_011740.1"/>
</dbReference>
<dbReference type="KEGG" id="efe:EFER_1699"/>
<dbReference type="HOGENOM" id="CLU_073287_0_0_6"/>
<dbReference type="OrthoDB" id="6454524at2"/>
<dbReference type="Proteomes" id="UP000000745">
    <property type="component" value="Chromosome"/>
</dbReference>
<dbReference type="GO" id="GO:0005886">
    <property type="term" value="C:plasma membrane"/>
    <property type="evidence" value="ECO:0007669"/>
    <property type="project" value="UniProtKB-SubCell"/>
</dbReference>
<dbReference type="HAMAP" id="MF_01067">
    <property type="entry name" value="UPF0259"/>
    <property type="match status" value="1"/>
</dbReference>
<dbReference type="InterPro" id="IPR009627">
    <property type="entry name" value="UPF0259"/>
</dbReference>
<dbReference type="NCBIfam" id="NF002774">
    <property type="entry name" value="PRK02868.1"/>
    <property type="match status" value="1"/>
</dbReference>
<dbReference type="Pfam" id="PF06790">
    <property type="entry name" value="UPF0259"/>
    <property type="match status" value="1"/>
</dbReference>
<gene>
    <name evidence="1" type="primary">yciC</name>
    <name type="ordered locus">EFER_1699</name>
</gene>
<reference key="1">
    <citation type="journal article" date="2009" name="PLoS Genet.">
        <title>Organised genome dynamics in the Escherichia coli species results in highly diverse adaptive paths.</title>
        <authorList>
            <person name="Touchon M."/>
            <person name="Hoede C."/>
            <person name="Tenaillon O."/>
            <person name="Barbe V."/>
            <person name="Baeriswyl S."/>
            <person name="Bidet P."/>
            <person name="Bingen E."/>
            <person name="Bonacorsi S."/>
            <person name="Bouchier C."/>
            <person name="Bouvet O."/>
            <person name="Calteau A."/>
            <person name="Chiapello H."/>
            <person name="Clermont O."/>
            <person name="Cruveiller S."/>
            <person name="Danchin A."/>
            <person name="Diard M."/>
            <person name="Dossat C."/>
            <person name="Karoui M.E."/>
            <person name="Frapy E."/>
            <person name="Garry L."/>
            <person name="Ghigo J.M."/>
            <person name="Gilles A.M."/>
            <person name="Johnson J."/>
            <person name="Le Bouguenec C."/>
            <person name="Lescat M."/>
            <person name="Mangenot S."/>
            <person name="Martinez-Jehanne V."/>
            <person name="Matic I."/>
            <person name="Nassif X."/>
            <person name="Oztas S."/>
            <person name="Petit M.A."/>
            <person name="Pichon C."/>
            <person name="Rouy Z."/>
            <person name="Ruf C.S."/>
            <person name="Schneider D."/>
            <person name="Tourret J."/>
            <person name="Vacherie B."/>
            <person name="Vallenet D."/>
            <person name="Medigue C."/>
            <person name="Rocha E.P.C."/>
            <person name="Denamur E."/>
        </authorList>
    </citation>
    <scope>NUCLEOTIDE SEQUENCE [LARGE SCALE GENOMIC DNA]</scope>
    <source>
        <strain>ATCC 35469 / DSM 13698 / BCRC 15582 / CCUG 18766 / IAM 14443 / JCM 21226 / LMG 7866 / NBRC 102419 / NCTC 12128 / CDC 0568-73</strain>
    </source>
</reference>